<gene>
    <name evidence="1" type="primary">cysI</name>
    <name type="ordered locus">Ssed_3806</name>
</gene>
<proteinExistence type="inferred from homology"/>
<protein>
    <recommendedName>
        <fullName evidence="1">Sulfite reductase [NADPH] hemoprotein beta-component</fullName>
        <shortName evidence="1">SiR-HP</shortName>
        <shortName evidence="1">SiRHP</shortName>
        <ecNumber evidence="1">1.8.1.2</ecNumber>
    </recommendedName>
</protein>
<evidence type="ECO:0000255" key="1">
    <source>
        <dbReference type="HAMAP-Rule" id="MF_01540"/>
    </source>
</evidence>
<evidence type="ECO:0000305" key="2"/>
<keyword id="KW-0004">4Fe-4S</keyword>
<keyword id="KW-0028">Amino-acid biosynthesis</keyword>
<keyword id="KW-0198">Cysteine biosynthesis</keyword>
<keyword id="KW-0349">Heme</keyword>
<keyword id="KW-0408">Iron</keyword>
<keyword id="KW-0411">Iron-sulfur</keyword>
<keyword id="KW-0479">Metal-binding</keyword>
<keyword id="KW-0521">NADP</keyword>
<keyword id="KW-0560">Oxidoreductase</keyword>
<keyword id="KW-1185">Reference proteome</keyword>
<organism>
    <name type="scientific">Shewanella sediminis (strain HAW-EB3)</name>
    <dbReference type="NCBI Taxonomy" id="425104"/>
    <lineage>
        <taxon>Bacteria</taxon>
        <taxon>Pseudomonadati</taxon>
        <taxon>Pseudomonadota</taxon>
        <taxon>Gammaproteobacteria</taxon>
        <taxon>Alteromonadales</taxon>
        <taxon>Shewanellaceae</taxon>
        <taxon>Shewanella</taxon>
    </lineage>
</organism>
<dbReference type="EC" id="1.8.1.2" evidence="1"/>
<dbReference type="EMBL" id="CP000821">
    <property type="protein sequence ID" value="ABV38410.1"/>
    <property type="status" value="ALT_INIT"/>
    <property type="molecule type" value="Genomic_DNA"/>
</dbReference>
<dbReference type="RefSeq" id="WP_041422349.1">
    <property type="nucleotide sequence ID" value="NC_009831.1"/>
</dbReference>
<dbReference type="SMR" id="A8FZY7"/>
<dbReference type="STRING" id="425104.Ssed_3806"/>
<dbReference type="KEGG" id="sse:Ssed_3806"/>
<dbReference type="eggNOG" id="COG0155">
    <property type="taxonomic scope" value="Bacteria"/>
</dbReference>
<dbReference type="HOGENOM" id="CLU_001975_3_2_6"/>
<dbReference type="OrthoDB" id="3189055at2"/>
<dbReference type="UniPathway" id="UPA00140">
    <property type="reaction ID" value="UER00207"/>
</dbReference>
<dbReference type="Proteomes" id="UP000002015">
    <property type="component" value="Chromosome"/>
</dbReference>
<dbReference type="GO" id="GO:0009337">
    <property type="term" value="C:sulfite reductase complex (NADPH)"/>
    <property type="evidence" value="ECO:0007669"/>
    <property type="project" value="InterPro"/>
</dbReference>
<dbReference type="GO" id="GO:0051539">
    <property type="term" value="F:4 iron, 4 sulfur cluster binding"/>
    <property type="evidence" value="ECO:0007669"/>
    <property type="project" value="UniProtKB-KW"/>
</dbReference>
<dbReference type="GO" id="GO:0020037">
    <property type="term" value="F:heme binding"/>
    <property type="evidence" value="ECO:0007669"/>
    <property type="project" value="InterPro"/>
</dbReference>
<dbReference type="GO" id="GO:0046872">
    <property type="term" value="F:metal ion binding"/>
    <property type="evidence" value="ECO:0007669"/>
    <property type="project" value="UniProtKB-KW"/>
</dbReference>
<dbReference type="GO" id="GO:0050661">
    <property type="term" value="F:NADP binding"/>
    <property type="evidence" value="ECO:0007669"/>
    <property type="project" value="InterPro"/>
</dbReference>
<dbReference type="GO" id="GO:0050311">
    <property type="term" value="F:sulfite reductase (ferredoxin) activity"/>
    <property type="evidence" value="ECO:0007669"/>
    <property type="project" value="TreeGrafter"/>
</dbReference>
<dbReference type="GO" id="GO:0004783">
    <property type="term" value="F:sulfite reductase (NADPH) activity"/>
    <property type="evidence" value="ECO:0007669"/>
    <property type="project" value="UniProtKB-UniRule"/>
</dbReference>
<dbReference type="GO" id="GO:0019344">
    <property type="term" value="P:cysteine biosynthetic process"/>
    <property type="evidence" value="ECO:0007669"/>
    <property type="project" value="UniProtKB-KW"/>
</dbReference>
<dbReference type="GO" id="GO:0070814">
    <property type="term" value="P:hydrogen sulfide biosynthetic process"/>
    <property type="evidence" value="ECO:0007669"/>
    <property type="project" value="UniProtKB-UniRule"/>
</dbReference>
<dbReference type="GO" id="GO:0000103">
    <property type="term" value="P:sulfate assimilation"/>
    <property type="evidence" value="ECO:0007669"/>
    <property type="project" value="UniProtKB-UniRule"/>
</dbReference>
<dbReference type="FunFam" id="3.30.413.10:FF:000003">
    <property type="entry name" value="Sulfite reductase [NADPH] hemoprotein beta-component"/>
    <property type="match status" value="1"/>
</dbReference>
<dbReference type="FunFam" id="3.30.413.10:FF:000004">
    <property type="entry name" value="Sulfite reductase [NADPH] hemoprotein beta-component"/>
    <property type="match status" value="1"/>
</dbReference>
<dbReference type="Gene3D" id="3.30.413.10">
    <property type="entry name" value="Sulfite Reductase Hemoprotein, domain 1"/>
    <property type="match status" value="2"/>
</dbReference>
<dbReference type="HAMAP" id="MF_01540">
    <property type="entry name" value="CysI"/>
    <property type="match status" value="1"/>
</dbReference>
<dbReference type="InterPro" id="IPR011786">
    <property type="entry name" value="CysI"/>
</dbReference>
<dbReference type="InterPro" id="IPR005117">
    <property type="entry name" value="NiRdtase/SiRdtase_haem-b_fer"/>
</dbReference>
<dbReference type="InterPro" id="IPR036136">
    <property type="entry name" value="Nit/Sulf_reduc_fer-like_dom_sf"/>
</dbReference>
<dbReference type="InterPro" id="IPR006067">
    <property type="entry name" value="NO2/SO3_Rdtase_4Fe4S_dom"/>
</dbReference>
<dbReference type="InterPro" id="IPR045169">
    <property type="entry name" value="NO2/SO3_Rdtase_4Fe4S_prot"/>
</dbReference>
<dbReference type="InterPro" id="IPR045854">
    <property type="entry name" value="NO2/SO3_Rdtase_4Fe4S_sf"/>
</dbReference>
<dbReference type="InterPro" id="IPR006066">
    <property type="entry name" value="NO2/SO3_Rdtase_FeS/sirohaem_BS"/>
</dbReference>
<dbReference type="NCBIfam" id="TIGR02041">
    <property type="entry name" value="CysI"/>
    <property type="match status" value="1"/>
</dbReference>
<dbReference type="NCBIfam" id="NF010029">
    <property type="entry name" value="PRK13504.1"/>
    <property type="match status" value="1"/>
</dbReference>
<dbReference type="PANTHER" id="PTHR11493:SF47">
    <property type="entry name" value="SULFITE REDUCTASE [NADPH] SUBUNIT BETA"/>
    <property type="match status" value="1"/>
</dbReference>
<dbReference type="PANTHER" id="PTHR11493">
    <property type="entry name" value="SULFITE REDUCTASE [NADPH] SUBUNIT BETA-RELATED"/>
    <property type="match status" value="1"/>
</dbReference>
<dbReference type="Pfam" id="PF01077">
    <property type="entry name" value="NIR_SIR"/>
    <property type="match status" value="1"/>
</dbReference>
<dbReference type="Pfam" id="PF03460">
    <property type="entry name" value="NIR_SIR_ferr"/>
    <property type="match status" value="2"/>
</dbReference>
<dbReference type="PRINTS" id="PR00397">
    <property type="entry name" value="SIROHAEM"/>
</dbReference>
<dbReference type="SUPFAM" id="SSF56014">
    <property type="entry name" value="Nitrite and sulphite reductase 4Fe-4S domain-like"/>
    <property type="match status" value="2"/>
</dbReference>
<dbReference type="SUPFAM" id="SSF55124">
    <property type="entry name" value="Nitrite/Sulfite reductase N-terminal domain-like"/>
    <property type="match status" value="2"/>
</dbReference>
<dbReference type="PROSITE" id="PS00365">
    <property type="entry name" value="NIR_SIR"/>
    <property type="match status" value="1"/>
</dbReference>
<name>CYSI_SHESH</name>
<reference key="1">
    <citation type="submission" date="2007-08" db="EMBL/GenBank/DDBJ databases">
        <title>Complete sequence of Shewanella sediminis HAW-EB3.</title>
        <authorList>
            <consortium name="US DOE Joint Genome Institute"/>
            <person name="Copeland A."/>
            <person name="Lucas S."/>
            <person name="Lapidus A."/>
            <person name="Barry K."/>
            <person name="Glavina del Rio T."/>
            <person name="Dalin E."/>
            <person name="Tice H."/>
            <person name="Pitluck S."/>
            <person name="Chertkov O."/>
            <person name="Brettin T."/>
            <person name="Bruce D."/>
            <person name="Detter J.C."/>
            <person name="Han C."/>
            <person name="Schmutz J."/>
            <person name="Larimer F."/>
            <person name="Land M."/>
            <person name="Hauser L."/>
            <person name="Kyrpides N."/>
            <person name="Kim E."/>
            <person name="Zhao J.-S."/>
            <person name="Richardson P."/>
        </authorList>
    </citation>
    <scope>NUCLEOTIDE SEQUENCE [LARGE SCALE GENOMIC DNA]</scope>
    <source>
        <strain>HAW-EB3</strain>
    </source>
</reference>
<feature type="chain" id="PRO_0000388518" description="Sulfite reductase [NADPH] hemoprotein beta-component">
    <location>
        <begin position="1"/>
        <end position="569"/>
    </location>
</feature>
<feature type="binding site" evidence="1">
    <location>
        <position position="433"/>
    </location>
    <ligand>
        <name>[4Fe-4S] cluster</name>
        <dbReference type="ChEBI" id="CHEBI:49883"/>
    </ligand>
</feature>
<feature type="binding site" evidence="1">
    <location>
        <position position="439"/>
    </location>
    <ligand>
        <name>[4Fe-4S] cluster</name>
        <dbReference type="ChEBI" id="CHEBI:49883"/>
    </ligand>
</feature>
<feature type="binding site" evidence="1">
    <location>
        <position position="478"/>
    </location>
    <ligand>
        <name>[4Fe-4S] cluster</name>
        <dbReference type="ChEBI" id="CHEBI:49883"/>
    </ligand>
</feature>
<feature type="binding site" evidence="1">
    <location>
        <position position="482"/>
    </location>
    <ligand>
        <name>[4Fe-4S] cluster</name>
        <dbReference type="ChEBI" id="CHEBI:49883"/>
    </ligand>
</feature>
<feature type="binding site" description="axial binding residue" evidence="1">
    <location>
        <position position="482"/>
    </location>
    <ligand>
        <name>siroheme</name>
        <dbReference type="ChEBI" id="CHEBI:60052"/>
    </ligand>
    <ligandPart>
        <name>Fe</name>
        <dbReference type="ChEBI" id="CHEBI:18248"/>
    </ligandPart>
</feature>
<comment type="function">
    <text evidence="1">Component of the sulfite reductase complex that catalyzes the 6-electron reduction of sulfite to sulfide. This is one of several activities required for the biosynthesis of L-cysteine from sulfate.</text>
</comment>
<comment type="catalytic activity">
    <reaction evidence="1">
        <text>hydrogen sulfide + 3 NADP(+) + 3 H2O = sulfite + 3 NADPH + 4 H(+)</text>
        <dbReference type="Rhea" id="RHEA:13801"/>
        <dbReference type="ChEBI" id="CHEBI:15377"/>
        <dbReference type="ChEBI" id="CHEBI:15378"/>
        <dbReference type="ChEBI" id="CHEBI:17359"/>
        <dbReference type="ChEBI" id="CHEBI:29919"/>
        <dbReference type="ChEBI" id="CHEBI:57783"/>
        <dbReference type="ChEBI" id="CHEBI:58349"/>
        <dbReference type="EC" id="1.8.1.2"/>
    </reaction>
</comment>
<comment type="cofactor">
    <cofactor evidence="1">
        <name>siroheme</name>
        <dbReference type="ChEBI" id="CHEBI:60052"/>
    </cofactor>
    <text evidence="1">Binds 1 siroheme per subunit.</text>
</comment>
<comment type="cofactor">
    <cofactor evidence="1">
        <name>[4Fe-4S] cluster</name>
        <dbReference type="ChEBI" id="CHEBI:49883"/>
    </cofactor>
    <text evidence="1">Binds 1 [4Fe-4S] cluster per subunit.</text>
</comment>
<comment type="pathway">
    <text evidence="1">Sulfur metabolism; hydrogen sulfide biosynthesis; hydrogen sulfide from sulfite (NADPH route): step 1/1.</text>
</comment>
<comment type="subunit">
    <text evidence="1">Alpha(8)-beta(8). The alpha component is a flavoprotein, the beta component is a hemoprotein.</text>
</comment>
<comment type="similarity">
    <text evidence="1">Belongs to the nitrite and sulfite reductase 4Fe-4S domain family.</text>
</comment>
<comment type="sequence caution" evidence="2">
    <conflict type="erroneous initiation">
        <sequence resource="EMBL-CDS" id="ABV38410"/>
    </conflict>
</comment>
<sequence length="569" mass="63689">MTVENVEEKLSINEHLKTDSDFLRGGIEEGLDTAVTGAFSEGDQQLIKFHGFYQQDDRDLRNERKEQKLEPLYSFMLRARVAGGVCTPEQWLGVDEISSTLTSSNSIRLTTRQTFQYHGISKRNLRTLIQSLDKKALDSIAACGDVNRNVMCNPNPVESRLHEQAYYWAKKLSDIYLPRTKAYAEIWLGDDKVATSEGDEVEPIYGKTYLPRKFKMAVAVPPDNDVDVYTNDLGLIAVAQEGELVGFNLVAGGGMGSTHGEVETFPRLADDFGFIKAEDTLKFAEAILKVQRDWGNRSNRKQSRLKYTIVKHGYDAFKAEVEKRAGVTFEPKRDVVIGDRGDRYGWIKGVDNRWHLTLFIEGGRIKDLPGQPLQTGLREIAKIHKGDFRMTSNQNFIVAGVAEEDKEAIEALARNHGLMGKLITETRGRSIACVALPTCALAMAEAERYFPDFLTKVESLQEKHGFADQGIVIRMTGCPNGCARPFAAEIGLVGKAPGRYNLYLGASFEGTRLNKLYRENIQEAEILSELDQLFARYVSEREEGETFGNFTVRSGVVKAVIDAAKDFHD</sequence>
<accession>A8FZY7</accession>